<reference key="1">
    <citation type="thesis" date="1998" institute="University of East Anglia" country="United Kingdom">
        <authorList>
            <person name="Palframan W."/>
        </authorList>
    </citation>
    <scope>NUCLEOTIDE SEQUENCE [GENOMIC DNA]</scope>
    <source>
        <strain>ATCC BAA-471 / A3(2) / M145</strain>
    </source>
</reference>
<reference key="2">
    <citation type="journal article" date="2000" name="Microbiology">
        <title>Multiple paralogous genes related to the Streptomyces coelicolor developmental regulatory gene whiB are present in Streptomyces and other actinomycetes.</title>
        <authorList>
            <person name="Soliveri J.A."/>
            <person name="Gomez J."/>
            <person name="Bishai W.R."/>
            <person name="Chater K.F."/>
        </authorList>
    </citation>
    <scope>NUCLEOTIDE SEQUENCE [GENOMIC DNA]</scope>
    <scope>INDUCTION</scope>
    <source>
        <strain>ATCC BAA-471 / A3(2) / M145</strain>
    </source>
</reference>
<reference key="3">
    <citation type="journal article" date="2000" name="Mol. Microbiol.">
        <title>Different alleles of the response regulator gene bldM arrest Streptomyces coelicolor development at distinct stages.</title>
        <authorList>
            <person name="Molle V."/>
            <person name="Buttner M.J."/>
        </authorList>
    </citation>
    <scope>NUCLEOTIDE SEQUENCE [GENOMIC DNA]</scope>
    <source>
        <strain>ATCC BAA-471 / A3(2) / M145</strain>
    </source>
</reference>
<reference key="4">
    <citation type="journal article" date="2002" name="Nature">
        <title>Complete genome sequence of the model actinomycete Streptomyces coelicolor A3(2).</title>
        <authorList>
            <person name="Bentley S.D."/>
            <person name="Chater K.F."/>
            <person name="Cerdeno-Tarraga A.-M."/>
            <person name="Challis G.L."/>
            <person name="Thomson N.R."/>
            <person name="James K.D."/>
            <person name="Harris D.E."/>
            <person name="Quail M.A."/>
            <person name="Kieser H."/>
            <person name="Harper D."/>
            <person name="Bateman A."/>
            <person name="Brown S."/>
            <person name="Chandra G."/>
            <person name="Chen C.W."/>
            <person name="Collins M."/>
            <person name="Cronin A."/>
            <person name="Fraser A."/>
            <person name="Goble A."/>
            <person name="Hidalgo J."/>
            <person name="Hornsby T."/>
            <person name="Howarth S."/>
            <person name="Huang C.-H."/>
            <person name="Kieser T."/>
            <person name="Larke L."/>
            <person name="Murphy L.D."/>
            <person name="Oliver K."/>
            <person name="O'Neil S."/>
            <person name="Rabbinowitsch E."/>
            <person name="Rajandream M.A."/>
            <person name="Rutherford K.M."/>
            <person name="Rutter S."/>
            <person name="Seeger K."/>
            <person name="Saunders D."/>
            <person name="Sharp S."/>
            <person name="Squares R."/>
            <person name="Squares S."/>
            <person name="Taylor K."/>
            <person name="Warren T."/>
            <person name="Wietzorrek A."/>
            <person name="Woodward J.R."/>
            <person name="Barrell B.G."/>
            <person name="Parkhill J."/>
            <person name="Hopwood D.A."/>
        </authorList>
    </citation>
    <scope>NUCLEOTIDE SEQUENCE [LARGE SCALE GENOMIC DNA]</scope>
    <source>
        <strain>ATCC BAA-471 / A3(2) / M145</strain>
    </source>
</reference>
<reference key="5">
    <citation type="journal article" date="2000" name="J. Bacteriol.">
        <title>WhiD and WhiB, homologous proteins required for different stages of sporulation in Streptomyces coelicolor A3(2).</title>
        <authorList>
            <person name="Molle V."/>
            <person name="Palframan W.J."/>
            <person name="Findlay K.C."/>
            <person name="Buttner M.J."/>
        </authorList>
    </citation>
    <scope>FUNCTION</scope>
    <scope>IDENTIFICATION</scope>
    <scope>INDUCTION</scope>
    <scope>DISRUPTION PHENOTYPE</scope>
    <scope>MUTAGENESIS OF ALA-21</scope>
    <source>
        <strain>ATCC BAA-471 / A3(2) / M145</strain>
    </source>
</reference>
<reference key="6">
    <citation type="journal article" date="2005" name="J. Biol. Chem.">
        <title>Evidence that the Streptomyces developmental protein WhiD, a member of the WhiB family, binds a [4Fe-4S] cluster.</title>
        <authorList>
            <person name="Jakimowicz P."/>
            <person name="Cheesman M.R."/>
            <person name="Bishai W.R."/>
            <person name="Chater K.F."/>
            <person name="Thomson A.J."/>
            <person name="Buttner M.J."/>
        </authorList>
    </citation>
    <scope>COFACTOR</scope>
    <scope>SUBUNIT</scope>
    <scope>MUTAGENESIS OF CYS-23; CYS-53; CYS-56 AND CYS-62</scope>
    <source>
        <strain>ATCC BAA-471 / A3(2) / M145</strain>
    </source>
</reference>
<reference key="7">
    <citation type="journal article" date="2009" name="Biochemistry">
        <title>Characterization of [4Fe-4S]-containing and cluster-free forms of Streptomyces WhiD.</title>
        <authorList>
            <person name="Crack J.C."/>
            <person name="den Hengst C.D."/>
            <person name="Jakimowicz P."/>
            <person name="Subramanian S."/>
            <person name="Johnson M.K."/>
            <person name="Buttner M.J."/>
            <person name="Thomson A.J."/>
            <person name="Le Brun N.E."/>
        </authorList>
    </citation>
    <scope>COFACTOR</scope>
    <scope>BIOPHYSICOCHEMICAL PROPERTIES</scope>
    <scope>SUBUNIT</scope>
    <scope>LACK OF ACTIVITY AS A DISULFIDE REDUCTASE</scope>
</reference>
<reference key="8">
    <citation type="journal article" date="2011" name="J. Am. Chem. Soc.">
        <title>Mechanistic insight into the nitrosylation of the [4Fe-4S] cluster of WhiB-like proteins.</title>
        <authorList>
            <person name="Crack J.C."/>
            <person name="Smith L.J."/>
            <person name="Stapleton M.R."/>
            <person name="Peck J."/>
            <person name="Watmough N.J."/>
            <person name="Buttner M.J."/>
            <person name="Buxton R.S."/>
            <person name="Green J."/>
            <person name="Oganesyan V.S."/>
            <person name="Thomson A.J."/>
            <person name="Le Brun N.E."/>
        </authorList>
    </citation>
    <scope>DINITROSYLATION</scope>
</reference>
<keyword id="KW-0004">4Fe-4S</keyword>
<keyword id="KW-0963">Cytoplasm</keyword>
<keyword id="KW-1015">Disulfide bond</keyword>
<keyword id="KW-0238">DNA-binding</keyword>
<keyword id="KW-0408">Iron</keyword>
<keyword id="KW-0411">Iron-sulfur</keyword>
<keyword id="KW-0479">Metal-binding</keyword>
<keyword id="KW-1185">Reference proteome</keyword>
<keyword id="KW-0749">Sporulation</keyword>
<keyword id="KW-0804">Transcription</keyword>
<keyword id="KW-0805">Transcription regulation</keyword>
<gene>
    <name type="primary">whiD</name>
    <name type="synonym">wblB</name>
    <name type="synonym">whiB3</name>
    <name type="ordered locus">SCO4767</name>
</gene>
<sequence>MADFSRLPGPNADLWDWQLLAACRGVDSSLFFHPEGERGAARSARENSAKEVCMRCPVRAECAAHALAVREPYGVWGGLTEDEREELMGRARNRLVAATASASAGGEAAGPH</sequence>
<organism>
    <name type="scientific">Streptomyces coelicolor (strain ATCC BAA-471 / A3(2) / M145)</name>
    <dbReference type="NCBI Taxonomy" id="100226"/>
    <lineage>
        <taxon>Bacteria</taxon>
        <taxon>Bacillati</taxon>
        <taxon>Actinomycetota</taxon>
        <taxon>Actinomycetes</taxon>
        <taxon>Kitasatosporales</taxon>
        <taxon>Streptomycetaceae</taxon>
        <taxon>Streptomyces</taxon>
        <taxon>Streptomyces albidoflavus group</taxon>
    </lineage>
</organism>
<comment type="function">
    <text evidence="1 2">Acts as a transcriptional regulator. Probably redox-responsive. The apo- but not holo-form probably binds DNA (By similarity). Plays a positive role in prespore maturation and the initiation of sporulation septation.</text>
</comment>
<comment type="cofactor">
    <cofactor evidence="1">
        <name>[4Fe-4S] cluster</name>
        <dbReference type="ChEBI" id="CHEBI:49883"/>
    </cofactor>
    <text evidence="1">Anaerobically binds 1 [4Fe-4S] cluster per subunit; cluster is lost on exposure to O(2). Cluster is stabilized in the presence of mycothiol. Following nitrosylation of the [4Fe-4S] cluster binds 1 [4Fe-8(NO)] cluster per subunit.</text>
</comment>
<comment type="biophysicochemical properties">
    <phDependence>
        <text evidence="5">Optimum pH is 7.0 to 8.0 for 4Fe-4S stability.</text>
    </phDependence>
</comment>
<comment type="subunit">
    <text evidence="4 5">The 4Fe-4S form is a monomer; upon oxidation forms a disulfide-bonded homodimer.</text>
</comment>
<comment type="subcellular location">
    <subcellularLocation>
        <location evidence="1">Cytoplasm</location>
    </subcellularLocation>
</comment>
<comment type="induction">
    <text evidence="2 3">Expressed in exponential phase (PubMed:10708372). Expressed from 2 promoters at the onset of sporulation, no longer expressed in mature colonies (PubMed:10671449).</text>
</comment>
<comment type="PTM">
    <text>Can be nitrosylated by NO, 8 NO react per cluster. These complexes are quite stable under anaerobic conditions, but degrade slowly aerobically.</text>
</comment>
<comment type="PTM">
    <text evidence="1">Upon Fe-S cluster removal intramolecular disulfide bonds are formed.</text>
</comment>
<comment type="disruption phenotype">
    <text evidence="2">Forms white aerial mycelium. Sporulation is reduced, spores are heat sensitive, lyse frequently and highly irregular in size. Septum placement and spore cell wall thickness is irregular.</text>
</comment>
<comment type="similarity">
    <text evidence="6">Belongs to the WhiB family.</text>
</comment>
<protein>
    <recommendedName>
        <fullName>Transcriptional regulator WhiD</fullName>
    </recommendedName>
    <alternativeName>
        <fullName>Transcriptional regulator WhiB3</fullName>
    </alternativeName>
</protein>
<name>WHID_STRCO</name>
<accession>Q7AKI9</accession>
<accession>O88103</accession>
<feature type="chain" id="PRO_0000420398" description="Transcriptional regulator WhiD">
    <location>
        <begin position="1"/>
        <end position="112"/>
    </location>
</feature>
<feature type="domain" description="4Fe-4S Wbl-type">
    <location>
        <begin position="22"/>
        <end position="86"/>
    </location>
</feature>
<feature type="binding site" evidence="6">
    <location>
        <position position="23"/>
    </location>
    <ligand>
        <name>[4Fe-4S] cluster</name>
        <dbReference type="ChEBI" id="CHEBI:49883"/>
    </ligand>
</feature>
<feature type="binding site" evidence="6">
    <location>
        <position position="53"/>
    </location>
    <ligand>
        <name>[4Fe-4S] cluster</name>
        <dbReference type="ChEBI" id="CHEBI:49883"/>
    </ligand>
</feature>
<feature type="binding site" evidence="6">
    <location>
        <position position="56"/>
    </location>
    <ligand>
        <name>[4Fe-4S] cluster</name>
        <dbReference type="ChEBI" id="CHEBI:49883"/>
    </ligand>
</feature>
<feature type="binding site" evidence="6">
    <location>
        <position position="62"/>
    </location>
    <ligand>
        <name>[4Fe-4S] cluster</name>
        <dbReference type="ChEBI" id="CHEBI:49883"/>
    </ligand>
</feature>
<feature type="mutagenesis site" description="In whiD16; white on sporulation media, forms defective spores killed at 50 degrees Celsius." evidence="2">
    <original>A</original>
    <variation>T</variation>
    <location>
        <position position="21"/>
    </location>
</feature>
<feature type="mutagenesis site" description="Spores remain white." evidence="4">
    <original>C</original>
    <variation>A</variation>
    <location>
        <position position="23"/>
    </location>
</feature>
<feature type="mutagenesis site" description="Spores remain white." evidence="4">
    <original>C</original>
    <variation>A</variation>
    <location>
        <position position="53"/>
    </location>
</feature>
<feature type="mutagenesis site" description="Spores remain white." evidence="4">
    <original>C</original>
    <variation>A</variation>
    <location>
        <position position="56"/>
    </location>
</feature>
<feature type="mutagenesis site" description="Spores remain white." evidence="4">
    <original>C</original>
    <variation>A</variation>
    <location>
        <position position="62"/>
    </location>
</feature>
<proteinExistence type="evidence at protein level"/>
<dbReference type="EMBL" id="AJ010601">
    <property type="protein sequence ID" value="CAA09262.1"/>
    <property type="molecule type" value="Genomic_DNA"/>
</dbReference>
<dbReference type="EMBL" id="AJ239086">
    <property type="protein sequence ID" value="CAB43031.1"/>
    <property type="molecule type" value="Genomic_DNA"/>
</dbReference>
<dbReference type="EMBL" id="AL939121">
    <property type="protein sequence ID" value="CAA20423.1"/>
    <property type="molecule type" value="Genomic_DNA"/>
</dbReference>
<dbReference type="PIR" id="T35596">
    <property type="entry name" value="T35596"/>
</dbReference>
<dbReference type="RefSeq" id="NP_628925.1">
    <property type="nucleotide sequence ID" value="NC_003888.3"/>
</dbReference>
<dbReference type="RefSeq" id="WP_003974205.1">
    <property type="nucleotide sequence ID" value="NZ_VNID01000016.1"/>
</dbReference>
<dbReference type="SMR" id="Q7AKI9"/>
<dbReference type="STRING" id="100226.gene:17762416"/>
<dbReference type="PaxDb" id="100226-SCO4767"/>
<dbReference type="KEGG" id="sco:SCO4767"/>
<dbReference type="PATRIC" id="fig|100226.15.peg.4839"/>
<dbReference type="eggNOG" id="ENOG5032S23">
    <property type="taxonomic scope" value="Bacteria"/>
</dbReference>
<dbReference type="HOGENOM" id="CLU_106245_6_0_11"/>
<dbReference type="InParanoid" id="Q7AKI9"/>
<dbReference type="OrthoDB" id="4954884at2"/>
<dbReference type="PhylomeDB" id="Q7AKI9"/>
<dbReference type="Proteomes" id="UP000001973">
    <property type="component" value="Chromosome"/>
</dbReference>
<dbReference type="GO" id="GO:0005737">
    <property type="term" value="C:cytoplasm"/>
    <property type="evidence" value="ECO:0007669"/>
    <property type="project" value="UniProtKB-SubCell"/>
</dbReference>
<dbReference type="GO" id="GO:0051539">
    <property type="term" value="F:4 iron, 4 sulfur cluster binding"/>
    <property type="evidence" value="ECO:0000318"/>
    <property type="project" value="GO_Central"/>
</dbReference>
<dbReference type="GO" id="GO:0035731">
    <property type="term" value="F:dinitrosyl-iron complex binding"/>
    <property type="evidence" value="ECO:0007669"/>
    <property type="project" value="UniProtKB-UniRule"/>
</dbReference>
<dbReference type="GO" id="GO:0003677">
    <property type="term" value="F:DNA binding"/>
    <property type="evidence" value="ECO:0000318"/>
    <property type="project" value="GO_Central"/>
</dbReference>
<dbReference type="GO" id="GO:0046872">
    <property type="term" value="F:metal ion binding"/>
    <property type="evidence" value="ECO:0007669"/>
    <property type="project" value="UniProtKB-KW"/>
</dbReference>
<dbReference type="GO" id="GO:0047134">
    <property type="term" value="F:protein-disulfide reductase [NAD(P)H] activity"/>
    <property type="evidence" value="ECO:0000318"/>
    <property type="project" value="GO_Central"/>
</dbReference>
<dbReference type="GO" id="GO:0045454">
    <property type="term" value="P:cell redox homeostasis"/>
    <property type="evidence" value="ECO:0000318"/>
    <property type="project" value="GO_Central"/>
</dbReference>
<dbReference type="GO" id="GO:0045892">
    <property type="term" value="P:negative regulation of DNA-templated transcription"/>
    <property type="evidence" value="ECO:0000318"/>
    <property type="project" value="GO_Central"/>
</dbReference>
<dbReference type="GO" id="GO:0030435">
    <property type="term" value="P:sporulation resulting in formation of a cellular spore"/>
    <property type="evidence" value="ECO:0007669"/>
    <property type="project" value="UniProtKB-KW"/>
</dbReference>
<dbReference type="HAMAP" id="MF_01479">
    <property type="entry name" value="WhiB"/>
    <property type="match status" value="1"/>
</dbReference>
<dbReference type="InterPro" id="IPR034768">
    <property type="entry name" value="4FE4S_WBL"/>
</dbReference>
<dbReference type="InterPro" id="IPR003482">
    <property type="entry name" value="Whib"/>
</dbReference>
<dbReference type="PANTHER" id="PTHR38839:SF5">
    <property type="entry name" value="TRANSCRIPTIONAL REGULATOR WHID"/>
    <property type="match status" value="1"/>
</dbReference>
<dbReference type="PANTHER" id="PTHR38839">
    <property type="entry name" value="TRANSCRIPTIONAL REGULATOR WHID-RELATED"/>
    <property type="match status" value="1"/>
</dbReference>
<dbReference type="Pfam" id="PF02467">
    <property type="entry name" value="Whib"/>
    <property type="match status" value="1"/>
</dbReference>
<dbReference type="PROSITE" id="PS51674">
    <property type="entry name" value="4FE4S_WBL"/>
    <property type="match status" value="1"/>
</dbReference>
<evidence type="ECO:0000250" key="1"/>
<evidence type="ECO:0000269" key="2">
    <source>
    </source>
</evidence>
<evidence type="ECO:0000269" key="3">
    <source>
    </source>
</evidence>
<evidence type="ECO:0000269" key="4">
    <source>
    </source>
</evidence>
<evidence type="ECO:0000269" key="5">
    <source>
    </source>
</evidence>
<evidence type="ECO:0000305" key="6"/>